<reference key="1">
    <citation type="journal article" date="1998" name="Nature">
        <title>Deciphering the biology of Mycobacterium tuberculosis from the complete genome sequence.</title>
        <authorList>
            <person name="Cole S.T."/>
            <person name="Brosch R."/>
            <person name="Parkhill J."/>
            <person name="Garnier T."/>
            <person name="Churcher C.M."/>
            <person name="Harris D.E."/>
            <person name="Gordon S.V."/>
            <person name="Eiglmeier K."/>
            <person name="Gas S."/>
            <person name="Barry C.E. III"/>
            <person name="Tekaia F."/>
            <person name="Badcock K."/>
            <person name="Basham D."/>
            <person name="Brown D."/>
            <person name="Chillingworth T."/>
            <person name="Connor R."/>
            <person name="Davies R.M."/>
            <person name="Devlin K."/>
            <person name="Feltwell T."/>
            <person name="Gentles S."/>
            <person name="Hamlin N."/>
            <person name="Holroyd S."/>
            <person name="Hornsby T."/>
            <person name="Jagels K."/>
            <person name="Krogh A."/>
            <person name="McLean J."/>
            <person name="Moule S."/>
            <person name="Murphy L.D."/>
            <person name="Oliver S."/>
            <person name="Osborne J."/>
            <person name="Quail M.A."/>
            <person name="Rajandream M.A."/>
            <person name="Rogers J."/>
            <person name="Rutter S."/>
            <person name="Seeger K."/>
            <person name="Skelton S."/>
            <person name="Squares S."/>
            <person name="Squares R."/>
            <person name="Sulston J.E."/>
            <person name="Taylor K."/>
            <person name="Whitehead S."/>
            <person name="Barrell B.G."/>
        </authorList>
    </citation>
    <scope>NUCLEOTIDE SEQUENCE [LARGE SCALE GENOMIC DNA]</scope>
    <source>
        <strain>ATCC 25618 / H37Rv</strain>
    </source>
</reference>
<reference key="2">
    <citation type="journal article" date="2011" name="Mol. Cell. Proteomics">
        <title>Proteogenomic analysis of Mycobacterium tuberculosis by high resolution mass spectrometry.</title>
        <authorList>
            <person name="Kelkar D.S."/>
            <person name="Kumar D."/>
            <person name="Kumar P."/>
            <person name="Balakrishnan L."/>
            <person name="Muthusamy B."/>
            <person name="Yadav A.K."/>
            <person name="Shrivastava P."/>
            <person name="Marimuthu A."/>
            <person name="Anand S."/>
            <person name="Sundaram H."/>
            <person name="Kingsbury R."/>
            <person name="Harsha H.C."/>
            <person name="Nair B."/>
            <person name="Prasad T.S."/>
            <person name="Chauhan D.S."/>
            <person name="Katoch K."/>
            <person name="Katoch V.M."/>
            <person name="Kumar P."/>
            <person name="Chaerkady R."/>
            <person name="Ramachandran S."/>
            <person name="Dash D."/>
            <person name="Pandey A."/>
        </authorList>
    </citation>
    <scope>IDENTIFICATION BY MASS SPECTROMETRY [LARGE SCALE ANALYSIS]</scope>
    <source>
        <strain>ATCC 25618 / H37Rv</strain>
    </source>
</reference>
<name>EX7L_MYCTU</name>
<evidence type="ECO:0000255" key="1">
    <source>
        <dbReference type="HAMAP-Rule" id="MF_00378"/>
    </source>
</evidence>
<sequence>MTQNSAENPFPVRAVAIRVAGWIDKLGAVWVEGQLAQITMRPDAKTVFMVLRDPAADMSLTVTCSRDLVLSAPVKLAEGVQVVVCGKPSFYTGRGTFSLRLSEIRAVGIGELLARIDRLRRLLDAEGLFDPRLKRPIPYLPNMIGLITGRASAAERDVTTVASARWPAARFAVRNVAVQGPNAVGQIVEALRELDRDPDVDVIVLARGGGSVEDLLPFSDETLCRAIAACRTPVVSAVGHEPDNPLCDLVVDLRAATPTDAAKKVVPDTAAEQRLIDDLRRRSAQALRNWVSREQRAVAQLRSRPVLADPMTMVSVRAEEVHRARSTLRRNLTLMVAAETERIGHLAARLATLGPAATLARGYAIVQTVAQTGPEGGSEPQVLRSVHDAPEGTKLRVRVADGALAAVSEGQTNGL</sequence>
<dbReference type="EC" id="3.1.11.6" evidence="1"/>
<dbReference type="EMBL" id="AL123456">
    <property type="protein sequence ID" value="CCP43861.1"/>
    <property type="molecule type" value="Genomic_DNA"/>
</dbReference>
<dbReference type="PIR" id="B70898">
    <property type="entry name" value="B70898"/>
</dbReference>
<dbReference type="RefSeq" id="NP_215624.1">
    <property type="nucleotide sequence ID" value="NC_000962.3"/>
</dbReference>
<dbReference type="RefSeq" id="WP_003405846.1">
    <property type="nucleotide sequence ID" value="NZ_NVQJ01000021.1"/>
</dbReference>
<dbReference type="SMR" id="P9WF31"/>
<dbReference type="FunCoup" id="P9WF31">
    <property type="interactions" value="104"/>
</dbReference>
<dbReference type="STRING" id="83332.Rv1108c"/>
<dbReference type="PaxDb" id="83332-Rv1108c"/>
<dbReference type="DNASU" id="885984"/>
<dbReference type="GeneID" id="45425082"/>
<dbReference type="GeneID" id="885984"/>
<dbReference type="KEGG" id="mtu:Rv1108c"/>
<dbReference type="KEGG" id="mtv:RVBD_1108c"/>
<dbReference type="TubercuList" id="Rv1108c"/>
<dbReference type="eggNOG" id="COG1570">
    <property type="taxonomic scope" value="Bacteria"/>
</dbReference>
<dbReference type="InParanoid" id="P9WF31"/>
<dbReference type="OrthoDB" id="9802795at2"/>
<dbReference type="PhylomeDB" id="P9WF31"/>
<dbReference type="Proteomes" id="UP000001584">
    <property type="component" value="Chromosome"/>
</dbReference>
<dbReference type="GO" id="GO:0005737">
    <property type="term" value="C:cytoplasm"/>
    <property type="evidence" value="ECO:0007669"/>
    <property type="project" value="UniProtKB-SubCell"/>
</dbReference>
<dbReference type="GO" id="GO:0009318">
    <property type="term" value="C:exodeoxyribonuclease VII complex"/>
    <property type="evidence" value="ECO:0007669"/>
    <property type="project" value="InterPro"/>
</dbReference>
<dbReference type="GO" id="GO:0009274">
    <property type="term" value="C:peptidoglycan-based cell wall"/>
    <property type="evidence" value="ECO:0007005"/>
    <property type="project" value="MTBBASE"/>
</dbReference>
<dbReference type="GO" id="GO:0008855">
    <property type="term" value="F:exodeoxyribonuclease VII activity"/>
    <property type="evidence" value="ECO:0007669"/>
    <property type="project" value="UniProtKB-UniRule"/>
</dbReference>
<dbReference type="GO" id="GO:0003676">
    <property type="term" value="F:nucleic acid binding"/>
    <property type="evidence" value="ECO:0007669"/>
    <property type="project" value="InterPro"/>
</dbReference>
<dbReference type="GO" id="GO:0006308">
    <property type="term" value="P:DNA catabolic process"/>
    <property type="evidence" value="ECO:0007669"/>
    <property type="project" value="UniProtKB-UniRule"/>
</dbReference>
<dbReference type="CDD" id="cd04489">
    <property type="entry name" value="ExoVII_LU_OBF"/>
    <property type="match status" value="1"/>
</dbReference>
<dbReference type="HAMAP" id="MF_00378">
    <property type="entry name" value="Exonuc_7_L"/>
    <property type="match status" value="1"/>
</dbReference>
<dbReference type="InterPro" id="IPR003753">
    <property type="entry name" value="Exonuc_VII_L"/>
</dbReference>
<dbReference type="InterPro" id="IPR020579">
    <property type="entry name" value="Exonuc_VII_lsu_C"/>
</dbReference>
<dbReference type="InterPro" id="IPR025824">
    <property type="entry name" value="OB-fold_nuc-bd_dom"/>
</dbReference>
<dbReference type="NCBIfam" id="TIGR00237">
    <property type="entry name" value="xseA"/>
    <property type="match status" value="1"/>
</dbReference>
<dbReference type="PANTHER" id="PTHR30008">
    <property type="entry name" value="EXODEOXYRIBONUCLEASE 7 LARGE SUBUNIT"/>
    <property type="match status" value="1"/>
</dbReference>
<dbReference type="PANTHER" id="PTHR30008:SF0">
    <property type="entry name" value="EXODEOXYRIBONUCLEASE 7 LARGE SUBUNIT"/>
    <property type="match status" value="1"/>
</dbReference>
<dbReference type="Pfam" id="PF02601">
    <property type="entry name" value="Exonuc_VII_L"/>
    <property type="match status" value="1"/>
</dbReference>
<dbReference type="Pfam" id="PF13742">
    <property type="entry name" value="tRNA_anti_2"/>
    <property type="match status" value="1"/>
</dbReference>
<organism>
    <name type="scientific">Mycobacterium tuberculosis (strain ATCC 25618 / H37Rv)</name>
    <dbReference type="NCBI Taxonomy" id="83332"/>
    <lineage>
        <taxon>Bacteria</taxon>
        <taxon>Bacillati</taxon>
        <taxon>Actinomycetota</taxon>
        <taxon>Actinomycetes</taxon>
        <taxon>Mycobacteriales</taxon>
        <taxon>Mycobacteriaceae</taxon>
        <taxon>Mycobacterium</taxon>
        <taxon>Mycobacterium tuberculosis complex</taxon>
    </lineage>
</organism>
<keyword id="KW-0963">Cytoplasm</keyword>
<keyword id="KW-0269">Exonuclease</keyword>
<keyword id="KW-0378">Hydrolase</keyword>
<keyword id="KW-0540">Nuclease</keyword>
<keyword id="KW-1185">Reference proteome</keyword>
<proteinExistence type="evidence at protein level"/>
<protein>
    <recommendedName>
        <fullName evidence="1">Exodeoxyribonuclease 7 large subunit</fullName>
        <ecNumber evidence="1">3.1.11.6</ecNumber>
    </recommendedName>
    <alternativeName>
        <fullName evidence="1">Exodeoxyribonuclease VII large subunit</fullName>
        <shortName evidence="1">Exonuclease VII large subunit</shortName>
    </alternativeName>
</protein>
<accession>P9WF31</accession>
<accession>L0T5X0</accession>
<accession>O53456</accession>
<accession>P67447</accession>
<gene>
    <name evidence="1" type="primary">xseA</name>
    <name type="ordered locus">Rv1108c</name>
    <name type="ORF">MTV017.61c</name>
</gene>
<comment type="function">
    <text evidence="1">Bidirectionally degrades single-stranded DNA into large acid-insoluble oligonucleotides, which are then degraded further into small acid-soluble oligonucleotides.</text>
</comment>
<comment type="catalytic activity">
    <reaction evidence="1">
        <text>Exonucleolytic cleavage in either 5'- to 3'- or 3'- to 5'-direction to yield nucleoside 5'-phosphates.</text>
        <dbReference type="EC" id="3.1.11.6"/>
    </reaction>
</comment>
<comment type="subunit">
    <text evidence="1">Heterooligomer composed of large and small subunits.</text>
</comment>
<comment type="subcellular location">
    <subcellularLocation>
        <location evidence="1">Cytoplasm</location>
    </subcellularLocation>
</comment>
<comment type="similarity">
    <text evidence="1">Belongs to the XseA family.</text>
</comment>
<feature type="chain" id="PRO_0000197860" description="Exodeoxyribonuclease 7 large subunit">
    <location>
        <begin position="1"/>
        <end position="415"/>
    </location>
</feature>